<reference key="1">
    <citation type="journal article" date="2003" name="Proc. Natl. Acad. Sci. U.S.A.">
        <title>Genome sequence of the cyanobacterium Prochlorococcus marinus SS120, a nearly minimal oxyphototrophic genome.</title>
        <authorList>
            <person name="Dufresne A."/>
            <person name="Salanoubat M."/>
            <person name="Partensky F."/>
            <person name="Artiguenave F."/>
            <person name="Axmann I.M."/>
            <person name="Barbe V."/>
            <person name="Duprat S."/>
            <person name="Galperin M.Y."/>
            <person name="Koonin E.V."/>
            <person name="Le Gall F."/>
            <person name="Makarova K.S."/>
            <person name="Ostrowski M."/>
            <person name="Oztas S."/>
            <person name="Robert C."/>
            <person name="Rogozin I.B."/>
            <person name="Scanlan D.J."/>
            <person name="Tandeau de Marsac N."/>
            <person name="Weissenbach J."/>
            <person name="Wincker P."/>
            <person name="Wolf Y.I."/>
            <person name="Hess W.R."/>
        </authorList>
    </citation>
    <scope>NUCLEOTIDE SEQUENCE [LARGE SCALE GENOMIC DNA]</scope>
    <source>
        <strain>SARG / CCMP1375 / SS120</strain>
    </source>
</reference>
<gene>
    <name evidence="2" type="primary">ddl</name>
    <name type="synonym">ddlA</name>
    <name type="ordered locus">Pro_1380</name>
</gene>
<feature type="chain" id="PRO_0000177852" description="D-alanine--D-alanine ligase">
    <location>
        <begin position="1"/>
        <end position="351"/>
    </location>
</feature>
<feature type="domain" description="ATP-grasp" evidence="2">
    <location>
        <begin position="141"/>
        <end position="349"/>
    </location>
</feature>
<feature type="binding site" evidence="2">
    <location>
        <begin position="176"/>
        <end position="231"/>
    </location>
    <ligand>
        <name>ATP</name>
        <dbReference type="ChEBI" id="CHEBI:30616"/>
    </ligand>
</feature>
<feature type="binding site" evidence="2">
    <location>
        <position position="302"/>
    </location>
    <ligand>
        <name>Mg(2+)</name>
        <dbReference type="ChEBI" id="CHEBI:18420"/>
        <label>1</label>
    </ligand>
</feature>
<feature type="binding site" evidence="2">
    <location>
        <position position="316"/>
    </location>
    <ligand>
        <name>Mg(2+)</name>
        <dbReference type="ChEBI" id="CHEBI:18420"/>
        <label>1</label>
    </ligand>
</feature>
<feature type="binding site" evidence="2">
    <location>
        <position position="316"/>
    </location>
    <ligand>
        <name>Mg(2+)</name>
        <dbReference type="ChEBI" id="CHEBI:18420"/>
        <label>2</label>
    </ligand>
</feature>
<feature type="binding site" evidence="2">
    <location>
        <position position="318"/>
    </location>
    <ligand>
        <name>Mg(2+)</name>
        <dbReference type="ChEBI" id="CHEBI:18420"/>
        <label>2</label>
    </ligand>
</feature>
<accession>Q7VAS4</accession>
<organism>
    <name type="scientific">Prochlorococcus marinus (strain SARG / CCMP1375 / SS120)</name>
    <dbReference type="NCBI Taxonomy" id="167539"/>
    <lineage>
        <taxon>Bacteria</taxon>
        <taxon>Bacillati</taxon>
        <taxon>Cyanobacteriota</taxon>
        <taxon>Cyanophyceae</taxon>
        <taxon>Synechococcales</taxon>
        <taxon>Prochlorococcaceae</taxon>
        <taxon>Prochlorococcus</taxon>
    </lineage>
</organism>
<evidence type="ECO:0000250" key="1"/>
<evidence type="ECO:0000255" key="2">
    <source>
        <dbReference type="HAMAP-Rule" id="MF_00047"/>
    </source>
</evidence>
<proteinExistence type="inferred from homology"/>
<name>DDL_PROMA</name>
<dbReference type="EC" id="6.3.2.4" evidence="2"/>
<dbReference type="EMBL" id="AE017126">
    <property type="protein sequence ID" value="AAQ00424.1"/>
    <property type="molecule type" value="Genomic_DNA"/>
</dbReference>
<dbReference type="RefSeq" id="NP_875771.1">
    <property type="nucleotide sequence ID" value="NC_005042.1"/>
</dbReference>
<dbReference type="RefSeq" id="WP_011125531.1">
    <property type="nucleotide sequence ID" value="NC_005042.1"/>
</dbReference>
<dbReference type="SMR" id="Q7VAS4"/>
<dbReference type="STRING" id="167539.Pro_1380"/>
<dbReference type="EnsemblBacteria" id="AAQ00424">
    <property type="protein sequence ID" value="AAQ00424"/>
    <property type="gene ID" value="Pro_1380"/>
</dbReference>
<dbReference type="KEGG" id="pma:Pro_1380"/>
<dbReference type="PATRIC" id="fig|167539.5.peg.1447"/>
<dbReference type="eggNOG" id="COG1181">
    <property type="taxonomic scope" value="Bacteria"/>
</dbReference>
<dbReference type="HOGENOM" id="CLU_039268_0_0_3"/>
<dbReference type="OrthoDB" id="9813261at2"/>
<dbReference type="UniPathway" id="UPA00219"/>
<dbReference type="Proteomes" id="UP000001420">
    <property type="component" value="Chromosome"/>
</dbReference>
<dbReference type="GO" id="GO:0005829">
    <property type="term" value="C:cytosol"/>
    <property type="evidence" value="ECO:0007669"/>
    <property type="project" value="TreeGrafter"/>
</dbReference>
<dbReference type="GO" id="GO:0005524">
    <property type="term" value="F:ATP binding"/>
    <property type="evidence" value="ECO:0007669"/>
    <property type="project" value="UniProtKB-KW"/>
</dbReference>
<dbReference type="GO" id="GO:0008716">
    <property type="term" value="F:D-alanine-D-alanine ligase activity"/>
    <property type="evidence" value="ECO:0007669"/>
    <property type="project" value="UniProtKB-UniRule"/>
</dbReference>
<dbReference type="GO" id="GO:0046872">
    <property type="term" value="F:metal ion binding"/>
    <property type="evidence" value="ECO:0007669"/>
    <property type="project" value="UniProtKB-KW"/>
</dbReference>
<dbReference type="GO" id="GO:0071555">
    <property type="term" value="P:cell wall organization"/>
    <property type="evidence" value="ECO:0007669"/>
    <property type="project" value="UniProtKB-KW"/>
</dbReference>
<dbReference type="GO" id="GO:0009252">
    <property type="term" value="P:peptidoglycan biosynthetic process"/>
    <property type="evidence" value="ECO:0007669"/>
    <property type="project" value="UniProtKB-UniRule"/>
</dbReference>
<dbReference type="GO" id="GO:0008360">
    <property type="term" value="P:regulation of cell shape"/>
    <property type="evidence" value="ECO:0007669"/>
    <property type="project" value="UniProtKB-KW"/>
</dbReference>
<dbReference type="FunFam" id="3.30.1490.20:FF:000007">
    <property type="entry name" value="D-alanine--D-alanine ligase"/>
    <property type="match status" value="1"/>
</dbReference>
<dbReference type="FunFam" id="3.30.470.20:FF:000008">
    <property type="entry name" value="D-alanine--D-alanine ligase"/>
    <property type="match status" value="1"/>
</dbReference>
<dbReference type="Gene3D" id="3.40.50.20">
    <property type="match status" value="1"/>
</dbReference>
<dbReference type="Gene3D" id="3.30.1490.20">
    <property type="entry name" value="ATP-grasp fold, A domain"/>
    <property type="match status" value="1"/>
</dbReference>
<dbReference type="Gene3D" id="3.30.470.20">
    <property type="entry name" value="ATP-grasp fold, B domain"/>
    <property type="match status" value="1"/>
</dbReference>
<dbReference type="HAMAP" id="MF_00047">
    <property type="entry name" value="Dala_Dala_lig"/>
    <property type="match status" value="1"/>
</dbReference>
<dbReference type="InterPro" id="IPR011761">
    <property type="entry name" value="ATP-grasp"/>
</dbReference>
<dbReference type="InterPro" id="IPR013815">
    <property type="entry name" value="ATP_grasp_subdomain_1"/>
</dbReference>
<dbReference type="InterPro" id="IPR000291">
    <property type="entry name" value="D-Ala_lig_Van_CS"/>
</dbReference>
<dbReference type="InterPro" id="IPR005905">
    <property type="entry name" value="D_ala_D_ala"/>
</dbReference>
<dbReference type="InterPro" id="IPR011095">
    <property type="entry name" value="Dala_Dala_lig_C"/>
</dbReference>
<dbReference type="InterPro" id="IPR011127">
    <property type="entry name" value="Dala_Dala_lig_N"/>
</dbReference>
<dbReference type="InterPro" id="IPR016185">
    <property type="entry name" value="PreATP-grasp_dom_sf"/>
</dbReference>
<dbReference type="NCBIfam" id="TIGR01205">
    <property type="entry name" value="D_ala_D_alaTIGR"/>
    <property type="match status" value="1"/>
</dbReference>
<dbReference type="NCBIfam" id="NF002528">
    <property type="entry name" value="PRK01966.1-4"/>
    <property type="match status" value="1"/>
</dbReference>
<dbReference type="PANTHER" id="PTHR23132">
    <property type="entry name" value="D-ALANINE--D-ALANINE LIGASE"/>
    <property type="match status" value="1"/>
</dbReference>
<dbReference type="PANTHER" id="PTHR23132:SF25">
    <property type="entry name" value="D-ALANINE--D-ALANINE LIGASE A"/>
    <property type="match status" value="1"/>
</dbReference>
<dbReference type="Pfam" id="PF07478">
    <property type="entry name" value="Dala_Dala_lig_C"/>
    <property type="match status" value="1"/>
</dbReference>
<dbReference type="Pfam" id="PF01820">
    <property type="entry name" value="Dala_Dala_lig_N"/>
    <property type="match status" value="1"/>
</dbReference>
<dbReference type="PIRSF" id="PIRSF039102">
    <property type="entry name" value="Ddl/VanB"/>
    <property type="match status" value="1"/>
</dbReference>
<dbReference type="SUPFAM" id="SSF56059">
    <property type="entry name" value="Glutathione synthetase ATP-binding domain-like"/>
    <property type="match status" value="1"/>
</dbReference>
<dbReference type="SUPFAM" id="SSF52440">
    <property type="entry name" value="PreATP-grasp domain"/>
    <property type="match status" value="1"/>
</dbReference>
<dbReference type="PROSITE" id="PS50975">
    <property type="entry name" value="ATP_GRASP"/>
    <property type="match status" value="1"/>
</dbReference>
<dbReference type="PROSITE" id="PS00843">
    <property type="entry name" value="DALA_DALA_LIGASE_1"/>
    <property type="match status" value="1"/>
</dbReference>
<dbReference type="PROSITE" id="PS00844">
    <property type="entry name" value="DALA_DALA_LIGASE_2"/>
    <property type="match status" value="1"/>
</dbReference>
<keyword id="KW-0067">ATP-binding</keyword>
<keyword id="KW-0133">Cell shape</keyword>
<keyword id="KW-0961">Cell wall biogenesis/degradation</keyword>
<keyword id="KW-0963">Cytoplasm</keyword>
<keyword id="KW-0436">Ligase</keyword>
<keyword id="KW-0460">Magnesium</keyword>
<keyword id="KW-0464">Manganese</keyword>
<keyword id="KW-0479">Metal-binding</keyword>
<keyword id="KW-0547">Nucleotide-binding</keyword>
<keyword id="KW-0573">Peptidoglycan synthesis</keyword>
<keyword id="KW-1185">Reference proteome</keyword>
<sequence>MRNAIKTVGIVFGGVSGEHEVSIKSARTIIHALKHPININKFDVISIYIDKKGKWWPSEIAEKVLESDPNFDKNIFFKQVEFIGLDHLPKETEKIQIWFPVLHGPNGEDGSIQGFFQLTGKPYVGSGVLGSALGMDKIAMKAAFSAAGLPQVNYCEIHSIDLLDKKRLSYLIQKIETQLGYPCFIKPANLGSSVGISKAYDKKELLNGLDLAAQLDSRIVVEKNIKARELECAVIGKKQIKTSCVGEVRYSSDWYDYDSKYSKNSTKTLIPAPIPEKISKEVQSLSILACKAISAEGIARVDFFYDEEKDSLWINEINTMPGFTEQSMYPMLWDASGIDISQLVARLIESA</sequence>
<comment type="function">
    <text evidence="2">Cell wall formation.</text>
</comment>
<comment type="catalytic activity">
    <reaction evidence="2">
        <text>2 D-alanine + ATP = D-alanyl-D-alanine + ADP + phosphate + H(+)</text>
        <dbReference type="Rhea" id="RHEA:11224"/>
        <dbReference type="ChEBI" id="CHEBI:15378"/>
        <dbReference type="ChEBI" id="CHEBI:30616"/>
        <dbReference type="ChEBI" id="CHEBI:43474"/>
        <dbReference type="ChEBI" id="CHEBI:57416"/>
        <dbReference type="ChEBI" id="CHEBI:57822"/>
        <dbReference type="ChEBI" id="CHEBI:456216"/>
        <dbReference type="EC" id="6.3.2.4"/>
    </reaction>
</comment>
<comment type="cofactor">
    <cofactor evidence="1">
        <name>Mg(2+)</name>
        <dbReference type="ChEBI" id="CHEBI:18420"/>
    </cofactor>
    <cofactor evidence="1">
        <name>Mn(2+)</name>
        <dbReference type="ChEBI" id="CHEBI:29035"/>
    </cofactor>
    <text evidence="1">Binds 2 magnesium or manganese ions per subunit.</text>
</comment>
<comment type="pathway">
    <text evidence="2">Cell wall biogenesis; peptidoglycan biosynthesis.</text>
</comment>
<comment type="subcellular location">
    <subcellularLocation>
        <location evidence="2">Cytoplasm</location>
    </subcellularLocation>
</comment>
<comment type="similarity">
    <text evidence="2">Belongs to the D-alanine--D-alanine ligase family.</text>
</comment>
<protein>
    <recommendedName>
        <fullName evidence="2">D-alanine--D-alanine ligase</fullName>
        <ecNumber evidence="2">6.3.2.4</ecNumber>
    </recommendedName>
    <alternativeName>
        <fullName evidence="2">D-Ala-D-Ala ligase</fullName>
    </alternativeName>
    <alternativeName>
        <fullName evidence="2">D-alanylalanine synthetase</fullName>
    </alternativeName>
</protein>